<accession>Q7UHU7</accession>
<sequence>MICLTPMVSLPLVTTTDSESTGPRKNHLLNWSLDQLKDWLQEQGQKPFRAKQIRRWLFSGRATSFEEMTDLPAKLRAQLEEHFAIFNATEAVVSKSKDGTEKILVRLADGGEVECVLLRDGPRRSICVSSQVGCAMGCVFCASGLDGVDRNLTGGEILEQMLRLQQRLPADERLSHIVMMGMGEPLANLPGVLSALDVARSEDGLGISPRRITISTVGLPPAIDKLAAAGIPYNLAVSLHAPNDELRSELVPVNRKIGIEPVLQAADRYFHASGRRLTFEYVLLGGINDGDEHARQLSQILRGRSVMMNVIPYNPVAGLPYRTPSGAAIARFRAILESAGVNVNFRQRKGDEINAACGQLRRNRGEVKATK</sequence>
<organism>
    <name type="scientific">Rhodopirellula baltica (strain DSM 10527 / NCIMB 13988 / SH1)</name>
    <dbReference type="NCBI Taxonomy" id="243090"/>
    <lineage>
        <taxon>Bacteria</taxon>
        <taxon>Pseudomonadati</taxon>
        <taxon>Planctomycetota</taxon>
        <taxon>Planctomycetia</taxon>
        <taxon>Pirellulales</taxon>
        <taxon>Pirellulaceae</taxon>
        <taxon>Rhodopirellula</taxon>
    </lineage>
</organism>
<protein>
    <recommendedName>
        <fullName evidence="1">Probable dual-specificity RNA methyltransferase RlmN</fullName>
        <ecNumber evidence="1">2.1.1.192</ecNumber>
    </recommendedName>
    <alternativeName>
        <fullName evidence="1">23S rRNA (adenine(2503)-C(2))-methyltransferase</fullName>
    </alternativeName>
    <alternativeName>
        <fullName evidence="1">23S rRNA m2A2503 methyltransferase</fullName>
    </alternativeName>
    <alternativeName>
        <fullName evidence="1">Ribosomal RNA large subunit methyltransferase N</fullName>
    </alternativeName>
    <alternativeName>
        <fullName evidence="1">tRNA (adenine(37)-C(2))-methyltransferase</fullName>
    </alternativeName>
    <alternativeName>
        <fullName evidence="1">tRNA m2A37 methyltransferase</fullName>
    </alternativeName>
</protein>
<feature type="chain" id="PRO_0000350367" description="Probable dual-specificity RNA methyltransferase RlmN">
    <location>
        <begin position="1"/>
        <end position="371"/>
    </location>
</feature>
<feature type="domain" description="Radical SAM core" evidence="2">
    <location>
        <begin position="120"/>
        <end position="346"/>
    </location>
</feature>
<feature type="active site" description="Proton acceptor" evidence="1">
    <location>
        <position position="114"/>
    </location>
</feature>
<feature type="active site" description="S-methylcysteine intermediate" evidence="1">
    <location>
        <position position="357"/>
    </location>
</feature>
<feature type="binding site" evidence="1">
    <location>
        <position position="134"/>
    </location>
    <ligand>
        <name>[4Fe-4S] cluster</name>
        <dbReference type="ChEBI" id="CHEBI:49883"/>
        <note>4Fe-4S-S-AdoMet</note>
    </ligand>
</feature>
<feature type="binding site" evidence="1">
    <location>
        <position position="138"/>
    </location>
    <ligand>
        <name>[4Fe-4S] cluster</name>
        <dbReference type="ChEBI" id="CHEBI:49883"/>
        <note>4Fe-4S-S-AdoMet</note>
    </ligand>
</feature>
<feature type="binding site" evidence="1">
    <location>
        <position position="141"/>
    </location>
    <ligand>
        <name>[4Fe-4S] cluster</name>
        <dbReference type="ChEBI" id="CHEBI:49883"/>
        <note>4Fe-4S-S-AdoMet</note>
    </ligand>
</feature>
<feature type="binding site" evidence="1">
    <location>
        <begin position="183"/>
        <end position="184"/>
    </location>
    <ligand>
        <name>S-adenosyl-L-methionine</name>
        <dbReference type="ChEBI" id="CHEBI:59789"/>
    </ligand>
</feature>
<feature type="binding site" evidence="1">
    <location>
        <position position="215"/>
    </location>
    <ligand>
        <name>S-adenosyl-L-methionine</name>
        <dbReference type="ChEBI" id="CHEBI:59789"/>
    </ligand>
</feature>
<feature type="binding site" evidence="1">
    <location>
        <begin position="238"/>
        <end position="240"/>
    </location>
    <ligand>
        <name>S-adenosyl-L-methionine</name>
        <dbReference type="ChEBI" id="CHEBI:59789"/>
    </ligand>
</feature>
<feature type="binding site" evidence="1">
    <location>
        <position position="314"/>
    </location>
    <ligand>
        <name>S-adenosyl-L-methionine</name>
        <dbReference type="ChEBI" id="CHEBI:59789"/>
    </ligand>
</feature>
<feature type="disulfide bond" description="(transient)" evidence="1">
    <location>
        <begin position="127"/>
        <end position="357"/>
    </location>
</feature>
<gene>
    <name evidence="1" type="primary">rlmN</name>
    <name type="ordered locus">RB12963</name>
</gene>
<name>RLMN_RHOBA</name>
<proteinExistence type="inferred from homology"/>
<comment type="function">
    <text evidence="1">Specifically methylates position 2 of adenine 2503 in 23S rRNA and position 2 of adenine 37 in tRNAs.</text>
</comment>
<comment type="catalytic activity">
    <reaction evidence="1">
        <text>adenosine(2503) in 23S rRNA + 2 reduced [2Fe-2S]-[ferredoxin] + 2 S-adenosyl-L-methionine = 2-methyladenosine(2503) in 23S rRNA + 5'-deoxyadenosine + L-methionine + 2 oxidized [2Fe-2S]-[ferredoxin] + S-adenosyl-L-homocysteine</text>
        <dbReference type="Rhea" id="RHEA:42916"/>
        <dbReference type="Rhea" id="RHEA-COMP:10000"/>
        <dbReference type="Rhea" id="RHEA-COMP:10001"/>
        <dbReference type="Rhea" id="RHEA-COMP:10152"/>
        <dbReference type="Rhea" id="RHEA-COMP:10282"/>
        <dbReference type="ChEBI" id="CHEBI:17319"/>
        <dbReference type="ChEBI" id="CHEBI:33737"/>
        <dbReference type="ChEBI" id="CHEBI:33738"/>
        <dbReference type="ChEBI" id="CHEBI:57844"/>
        <dbReference type="ChEBI" id="CHEBI:57856"/>
        <dbReference type="ChEBI" id="CHEBI:59789"/>
        <dbReference type="ChEBI" id="CHEBI:74411"/>
        <dbReference type="ChEBI" id="CHEBI:74497"/>
        <dbReference type="EC" id="2.1.1.192"/>
    </reaction>
</comment>
<comment type="catalytic activity">
    <reaction evidence="1">
        <text>adenosine(37) in tRNA + 2 reduced [2Fe-2S]-[ferredoxin] + 2 S-adenosyl-L-methionine = 2-methyladenosine(37) in tRNA + 5'-deoxyadenosine + L-methionine + 2 oxidized [2Fe-2S]-[ferredoxin] + S-adenosyl-L-homocysteine</text>
        <dbReference type="Rhea" id="RHEA:43332"/>
        <dbReference type="Rhea" id="RHEA-COMP:10000"/>
        <dbReference type="Rhea" id="RHEA-COMP:10001"/>
        <dbReference type="Rhea" id="RHEA-COMP:10162"/>
        <dbReference type="Rhea" id="RHEA-COMP:10485"/>
        <dbReference type="ChEBI" id="CHEBI:17319"/>
        <dbReference type="ChEBI" id="CHEBI:33737"/>
        <dbReference type="ChEBI" id="CHEBI:33738"/>
        <dbReference type="ChEBI" id="CHEBI:57844"/>
        <dbReference type="ChEBI" id="CHEBI:57856"/>
        <dbReference type="ChEBI" id="CHEBI:59789"/>
        <dbReference type="ChEBI" id="CHEBI:74411"/>
        <dbReference type="ChEBI" id="CHEBI:74497"/>
        <dbReference type="EC" id="2.1.1.192"/>
    </reaction>
</comment>
<comment type="cofactor">
    <cofactor evidence="1">
        <name>[4Fe-4S] cluster</name>
        <dbReference type="ChEBI" id="CHEBI:49883"/>
    </cofactor>
    <text evidence="1">Binds 1 [4Fe-4S] cluster. The cluster is coordinated with 3 cysteines and an exchangeable S-adenosyl-L-methionine.</text>
</comment>
<comment type="subcellular location">
    <subcellularLocation>
        <location evidence="1">Cytoplasm</location>
    </subcellularLocation>
</comment>
<comment type="miscellaneous">
    <text evidence="1">Reaction proceeds by a ping-pong mechanism involving intermediate methylation of a conserved cysteine residue.</text>
</comment>
<comment type="similarity">
    <text evidence="1">Belongs to the radical SAM superfamily. RlmN family.</text>
</comment>
<evidence type="ECO:0000255" key="1">
    <source>
        <dbReference type="HAMAP-Rule" id="MF_01849"/>
    </source>
</evidence>
<evidence type="ECO:0000255" key="2">
    <source>
        <dbReference type="PROSITE-ProRule" id="PRU01266"/>
    </source>
</evidence>
<keyword id="KW-0004">4Fe-4S</keyword>
<keyword id="KW-0963">Cytoplasm</keyword>
<keyword id="KW-1015">Disulfide bond</keyword>
<keyword id="KW-0408">Iron</keyword>
<keyword id="KW-0411">Iron-sulfur</keyword>
<keyword id="KW-0479">Metal-binding</keyword>
<keyword id="KW-0489">Methyltransferase</keyword>
<keyword id="KW-1185">Reference proteome</keyword>
<keyword id="KW-0698">rRNA processing</keyword>
<keyword id="KW-0949">S-adenosyl-L-methionine</keyword>
<keyword id="KW-0808">Transferase</keyword>
<keyword id="KW-0819">tRNA processing</keyword>
<reference key="1">
    <citation type="journal article" date="2003" name="Proc. Natl. Acad. Sci. U.S.A.">
        <title>Complete genome sequence of the marine planctomycete Pirellula sp. strain 1.</title>
        <authorList>
            <person name="Gloeckner F.O."/>
            <person name="Kube M."/>
            <person name="Bauer M."/>
            <person name="Teeling H."/>
            <person name="Lombardot T."/>
            <person name="Ludwig W."/>
            <person name="Gade D."/>
            <person name="Beck A."/>
            <person name="Borzym K."/>
            <person name="Heitmann K."/>
            <person name="Rabus R."/>
            <person name="Schlesner H."/>
            <person name="Amann R."/>
            <person name="Reinhardt R."/>
        </authorList>
    </citation>
    <scope>NUCLEOTIDE SEQUENCE [LARGE SCALE GENOMIC DNA]</scope>
    <source>
        <strain>DSM 10527 / NCIMB 13988 / SH1</strain>
    </source>
</reference>
<dbReference type="EC" id="2.1.1.192" evidence="1"/>
<dbReference type="EMBL" id="BX294156">
    <property type="protein sequence ID" value="CAD77872.1"/>
    <property type="molecule type" value="Genomic_DNA"/>
</dbReference>
<dbReference type="RefSeq" id="NP_870795.1">
    <property type="nucleotide sequence ID" value="NC_005027.1"/>
</dbReference>
<dbReference type="SMR" id="Q7UHU7"/>
<dbReference type="FunCoup" id="Q7UHU7">
    <property type="interactions" value="492"/>
</dbReference>
<dbReference type="STRING" id="243090.RB12963"/>
<dbReference type="EnsemblBacteria" id="CAD77872">
    <property type="protein sequence ID" value="CAD77872"/>
    <property type="gene ID" value="RB12963"/>
</dbReference>
<dbReference type="KEGG" id="rba:RB12963"/>
<dbReference type="PATRIC" id="fig|243090.15.peg.6280"/>
<dbReference type="eggNOG" id="COG0820">
    <property type="taxonomic scope" value="Bacteria"/>
</dbReference>
<dbReference type="HOGENOM" id="CLU_029101_0_1_0"/>
<dbReference type="InParanoid" id="Q7UHU7"/>
<dbReference type="OrthoDB" id="9793973at2"/>
<dbReference type="Proteomes" id="UP000001025">
    <property type="component" value="Chromosome"/>
</dbReference>
<dbReference type="GO" id="GO:0005737">
    <property type="term" value="C:cytoplasm"/>
    <property type="evidence" value="ECO:0007669"/>
    <property type="project" value="UniProtKB-SubCell"/>
</dbReference>
<dbReference type="GO" id="GO:0051539">
    <property type="term" value="F:4 iron, 4 sulfur cluster binding"/>
    <property type="evidence" value="ECO:0007669"/>
    <property type="project" value="UniProtKB-UniRule"/>
</dbReference>
<dbReference type="GO" id="GO:0046872">
    <property type="term" value="F:metal ion binding"/>
    <property type="evidence" value="ECO:0007669"/>
    <property type="project" value="UniProtKB-KW"/>
</dbReference>
<dbReference type="GO" id="GO:0070040">
    <property type="term" value="F:rRNA (adenine(2503)-C2-)-methyltransferase activity"/>
    <property type="evidence" value="ECO:0007669"/>
    <property type="project" value="UniProtKB-UniRule"/>
</dbReference>
<dbReference type="GO" id="GO:0019843">
    <property type="term" value="F:rRNA binding"/>
    <property type="evidence" value="ECO:0007669"/>
    <property type="project" value="UniProtKB-UniRule"/>
</dbReference>
<dbReference type="GO" id="GO:0002935">
    <property type="term" value="F:tRNA (adenine(37)-C2)-methyltransferase activity"/>
    <property type="evidence" value="ECO:0007669"/>
    <property type="project" value="UniProtKB-UniRule"/>
</dbReference>
<dbReference type="GO" id="GO:0000049">
    <property type="term" value="F:tRNA binding"/>
    <property type="evidence" value="ECO:0007669"/>
    <property type="project" value="UniProtKB-UniRule"/>
</dbReference>
<dbReference type="GO" id="GO:0070475">
    <property type="term" value="P:rRNA base methylation"/>
    <property type="evidence" value="ECO:0000318"/>
    <property type="project" value="GO_Central"/>
</dbReference>
<dbReference type="GO" id="GO:0030488">
    <property type="term" value="P:tRNA methylation"/>
    <property type="evidence" value="ECO:0000318"/>
    <property type="project" value="GO_Central"/>
</dbReference>
<dbReference type="CDD" id="cd01335">
    <property type="entry name" value="Radical_SAM"/>
    <property type="match status" value="1"/>
</dbReference>
<dbReference type="FunFam" id="3.20.20.70:FF:000014">
    <property type="entry name" value="Probable dual-specificity RNA methyltransferase RlmN"/>
    <property type="match status" value="1"/>
</dbReference>
<dbReference type="Gene3D" id="1.10.150.530">
    <property type="match status" value="1"/>
</dbReference>
<dbReference type="Gene3D" id="3.20.20.70">
    <property type="entry name" value="Aldolase class I"/>
    <property type="match status" value="1"/>
</dbReference>
<dbReference type="HAMAP" id="MF_01849">
    <property type="entry name" value="RNA_methyltr_RlmN"/>
    <property type="match status" value="1"/>
</dbReference>
<dbReference type="InterPro" id="IPR013785">
    <property type="entry name" value="Aldolase_TIM"/>
</dbReference>
<dbReference type="InterPro" id="IPR040072">
    <property type="entry name" value="Methyltransferase_A"/>
</dbReference>
<dbReference type="InterPro" id="IPR048641">
    <property type="entry name" value="RlmN_N"/>
</dbReference>
<dbReference type="InterPro" id="IPR027492">
    <property type="entry name" value="RNA_MTrfase_RlmN"/>
</dbReference>
<dbReference type="InterPro" id="IPR004383">
    <property type="entry name" value="rRNA_lsu_MTrfase_RlmN/Cfr"/>
</dbReference>
<dbReference type="InterPro" id="IPR007197">
    <property type="entry name" value="rSAM"/>
</dbReference>
<dbReference type="NCBIfam" id="TIGR00048">
    <property type="entry name" value="rRNA_mod_RlmN"/>
    <property type="match status" value="1"/>
</dbReference>
<dbReference type="PANTHER" id="PTHR30544">
    <property type="entry name" value="23S RRNA METHYLTRANSFERASE"/>
    <property type="match status" value="1"/>
</dbReference>
<dbReference type="PANTHER" id="PTHR30544:SF5">
    <property type="entry name" value="RADICAL SAM CORE DOMAIN-CONTAINING PROTEIN"/>
    <property type="match status" value="1"/>
</dbReference>
<dbReference type="Pfam" id="PF04055">
    <property type="entry name" value="Radical_SAM"/>
    <property type="match status" value="1"/>
</dbReference>
<dbReference type="Pfam" id="PF21016">
    <property type="entry name" value="RlmN_N"/>
    <property type="match status" value="1"/>
</dbReference>
<dbReference type="PIRSF" id="PIRSF006004">
    <property type="entry name" value="CHP00048"/>
    <property type="match status" value="1"/>
</dbReference>
<dbReference type="SFLD" id="SFLDF00275">
    <property type="entry name" value="adenosine_C2_methyltransferase"/>
    <property type="match status" value="1"/>
</dbReference>
<dbReference type="SFLD" id="SFLDG01062">
    <property type="entry name" value="methyltransferase_(Class_A)"/>
    <property type="match status" value="1"/>
</dbReference>
<dbReference type="SUPFAM" id="SSF102114">
    <property type="entry name" value="Radical SAM enzymes"/>
    <property type="match status" value="1"/>
</dbReference>
<dbReference type="PROSITE" id="PS51918">
    <property type="entry name" value="RADICAL_SAM"/>
    <property type="match status" value="1"/>
</dbReference>